<accession>Q0VMI4</accession>
<dbReference type="EC" id="2.2.1.7" evidence="1"/>
<dbReference type="EMBL" id="AM286690">
    <property type="protein sequence ID" value="CAL17614.1"/>
    <property type="molecule type" value="Genomic_DNA"/>
</dbReference>
<dbReference type="RefSeq" id="WP_011589444.1">
    <property type="nucleotide sequence ID" value="NC_008260.1"/>
</dbReference>
<dbReference type="SMR" id="Q0VMI4"/>
<dbReference type="STRING" id="393595.ABO_2166"/>
<dbReference type="KEGG" id="abo:ABO_2166"/>
<dbReference type="eggNOG" id="COG1154">
    <property type="taxonomic scope" value="Bacteria"/>
</dbReference>
<dbReference type="HOGENOM" id="CLU_009227_1_4_6"/>
<dbReference type="OrthoDB" id="9803371at2"/>
<dbReference type="UniPathway" id="UPA00064">
    <property type="reaction ID" value="UER00091"/>
</dbReference>
<dbReference type="Proteomes" id="UP000008871">
    <property type="component" value="Chromosome"/>
</dbReference>
<dbReference type="GO" id="GO:0005829">
    <property type="term" value="C:cytosol"/>
    <property type="evidence" value="ECO:0007669"/>
    <property type="project" value="TreeGrafter"/>
</dbReference>
<dbReference type="GO" id="GO:0008661">
    <property type="term" value="F:1-deoxy-D-xylulose-5-phosphate synthase activity"/>
    <property type="evidence" value="ECO:0007669"/>
    <property type="project" value="UniProtKB-UniRule"/>
</dbReference>
<dbReference type="GO" id="GO:0000287">
    <property type="term" value="F:magnesium ion binding"/>
    <property type="evidence" value="ECO:0007669"/>
    <property type="project" value="UniProtKB-UniRule"/>
</dbReference>
<dbReference type="GO" id="GO:0030976">
    <property type="term" value="F:thiamine pyrophosphate binding"/>
    <property type="evidence" value="ECO:0007669"/>
    <property type="project" value="UniProtKB-UniRule"/>
</dbReference>
<dbReference type="GO" id="GO:0052865">
    <property type="term" value="P:1-deoxy-D-xylulose 5-phosphate biosynthetic process"/>
    <property type="evidence" value="ECO:0007669"/>
    <property type="project" value="UniProtKB-UniPathway"/>
</dbReference>
<dbReference type="GO" id="GO:0019288">
    <property type="term" value="P:isopentenyl diphosphate biosynthetic process, methylerythritol 4-phosphate pathway"/>
    <property type="evidence" value="ECO:0007669"/>
    <property type="project" value="TreeGrafter"/>
</dbReference>
<dbReference type="GO" id="GO:0016114">
    <property type="term" value="P:terpenoid biosynthetic process"/>
    <property type="evidence" value="ECO:0007669"/>
    <property type="project" value="UniProtKB-UniRule"/>
</dbReference>
<dbReference type="GO" id="GO:0009228">
    <property type="term" value="P:thiamine biosynthetic process"/>
    <property type="evidence" value="ECO:0007669"/>
    <property type="project" value="UniProtKB-UniRule"/>
</dbReference>
<dbReference type="CDD" id="cd02007">
    <property type="entry name" value="TPP_DXS"/>
    <property type="match status" value="1"/>
</dbReference>
<dbReference type="CDD" id="cd07033">
    <property type="entry name" value="TPP_PYR_DXS_TK_like"/>
    <property type="match status" value="1"/>
</dbReference>
<dbReference type="FunFam" id="3.40.50.920:FF:000002">
    <property type="entry name" value="1-deoxy-D-xylulose-5-phosphate synthase"/>
    <property type="match status" value="1"/>
</dbReference>
<dbReference type="FunFam" id="3.40.50.970:FF:000005">
    <property type="entry name" value="1-deoxy-D-xylulose-5-phosphate synthase"/>
    <property type="match status" value="1"/>
</dbReference>
<dbReference type="Gene3D" id="3.40.50.920">
    <property type="match status" value="1"/>
</dbReference>
<dbReference type="Gene3D" id="3.40.50.970">
    <property type="match status" value="2"/>
</dbReference>
<dbReference type="HAMAP" id="MF_00315">
    <property type="entry name" value="DXP_synth"/>
    <property type="match status" value="1"/>
</dbReference>
<dbReference type="InterPro" id="IPR005477">
    <property type="entry name" value="Dxylulose-5-P_synthase"/>
</dbReference>
<dbReference type="InterPro" id="IPR029061">
    <property type="entry name" value="THDP-binding"/>
</dbReference>
<dbReference type="InterPro" id="IPR009014">
    <property type="entry name" value="Transketo_C/PFOR_II"/>
</dbReference>
<dbReference type="InterPro" id="IPR005475">
    <property type="entry name" value="Transketolase-like_Pyr-bd"/>
</dbReference>
<dbReference type="InterPro" id="IPR020826">
    <property type="entry name" value="Transketolase_BS"/>
</dbReference>
<dbReference type="InterPro" id="IPR033248">
    <property type="entry name" value="Transketolase_C"/>
</dbReference>
<dbReference type="NCBIfam" id="TIGR00204">
    <property type="entry name" value="dxs"/>
    <property type="match status" value="1"/>
</dbReference>
<dbReference type="NCBIfam" id="NF003933">
    <property type="entry name" value="PRK05444.2-2"/>
    <property type="match status" value="1"/>
</dbReference>
<dbReference type="PANTHER" id="PTHR43322">
    <property type="entry name" value="1-D-DEOXYXYLULOSE 5-PHOSPHATE SYNTHASE-RELATED"/>
    <property type="match status" value="1"/>
</dbReference>
<dbReference type="PANTHER" id="PTHR43322:SF5">
    <property type="entry name" value="1-DEOXY-D-XYLULOSE-5-PHOSPHATE SYNTHASE, CHLOROPLASTIC"/>
    <property type="match status" value="1"/>
</dbReference>
<dbReference type="Pfam" id="PF13292">
    <property type="entry name" value="DXP_synthase_N"/>
    <property type="match status" value="1"/>
</dbReference>
<dbReference type="Pfam" id="PF02779">
    <property type="entry name" value="Transket_pyr"/>
    <property type="match status" value="1"/>
</dbReference>
<dbReference type="Pfam" id="PF02780">
    <property type="entry name" value="Transketolase_C"/>
    <property type="match status" value="1"/>
</dbReference>
<dbReference type="SMART" id="SM00861">
    <property type="entry name" value="Transket_pyr"/>
    <property type="match status" value="1"/>
</dbReference>
<dbReference type="SUPFAM" id="SSF52518">
    <property type="entry name" value="Thiamin diphosphate-binding fold (THDP-binding)"/>
    <property type="match status" value="2"/>
</dbReference>
<dbReference type="SUPFAM" id="SSF52922">
    <property type="entry name" value="TK C-terminal domain-like"/>
    <property type="match status" value="1"/>
</dbReference>
<dbReference type="PROSITE" id="PS00802">
    <property type="entry name" value="TRANSKETOLASE_2"/>
    <property type="match status" value="1"/>
</dbReference>
<protein>
    <recommendedName>
        <fullName evidence="1">1-deoxy-D-xylulose-5-phosphate synthase</fullName>
        <ecNumber evidence="1">2.2.1.7</ecNumber>
    </recommendedName>
    <alternativeName>
        <fullName evidence="1">1-deoxyxylulose-5-phosphate synthase</fullName>
        <shortName evidence="1">DXP synthase</shortName>
        <shortName evidence="1">DXPS</shortName>
    </alternativeName>
</protein>
<evidence type="ECO:0000255" key="1">
    <source>
        <dbReference type="HAMAP-Rule" id="MF_00315"/>
    </source>
</evidence>
<comment type="function">
    <text evidence="1">Catalyzes the acyloin condensation reaction between C atoms 2 and 3 of pyruvate and glyceraldehyde 3-phosphate to yield 1-deoxy-D-xylulose-5-phosphate (DXP).</text>
</comment>
<comment type="catalytic activity">
    <reaction evidence="1">
        <text>D-glyceraldehyde 3-phosphate + pyruvate + H(+) = 1-deoxy-D-xylulose 5-phosphate + CO2</text>
        <dbReference type="Rhea" id="RHEA:12605"/>
        <dbReference type="ChEBI" id="CHEBI:15361"/>
        <dbReference type="ChEBI" id="CHEBI:15378"/>
        <dbReference type="ChEBI" id="CHEBI:16526"/>
        <dbReference type="ChEBI" id="CHEBI:57792"/>
        <dbReference type="ChEBI" id="CHEBI:59776"/>
        <dbReference type="EC" id="2.2.1.7"/>
    </reaction>
</comment>
<comment type="cofactor">
    <cofactor evidence="1">
        <name>Mg(2+)</name>
        <dbReference type="ChEBI" id="CHEBI:18420"/>
    </cofactor>
    <text evidence="1">Binds 1 Mg(2+) ion per subunit.</text>
</comment>
<comment type="cofactor">
    <cofactor evidence="1">
        <name>thiamine diphosphate</name>
        <dbReference type="ChEBI" id="CHEBI:58937"/>
    </cofactor>
    <text evidence="1">Binds 1 thiamine pyrophosphate per subunit.</text>
</comment>
<comment type="pathway">
    <text evidence="1">Metabolic intermediate biosynthesis; 1-deoxy-D-xylulose 5-phosphate biosynthesis; 1-deoxy-D-xylulose 5-phosphate from D-glyceraldehyde 3-phosphate and pyruvate: step 1/1.</text>
</comment>
<comment type="subunit">
    <text evidence="1">Homodimer.</text>
</comment>
<comment type="similarity">
    <text evidence="1">Belongs to the transketolase family. DXPS subfamily.</text>
</comment>
<gene>
    <name evidence="1" type="primary">dxs</name>
    <name type="ordered locus">ABO_2166</name>
</gene>
<name>DXS_ALCBS</name>
<feature type="chain" id="PRO_0000256369" description="1-deoxy-D-xylulose-5-phosphate synthase">
    <location>
        <begin position="1"/>
        <end position="645"/>
    </location>
</feature>
<feature type="binding site" evidence="1">
    <location>
        <position position="87"/>
    </location>
    <ligand>
        <name>thiamine diphosphate</name>
        <dbReference type="ChEBI" id="CHEBI:58937"/>
    </ligand>
</feature>
<feature type="binding site" evidence="1">
    <location>
        <begin position="128"/>
        <end position="130"/>
    </location>
    <ligand>
        <name>thiamine diphosphate</name>
        <dbReference type="ChEBI" id="CHEBI:58937"/>
    </ligand>
</feature>
<feature type="binding site" evidence="1">
    <location>
        <position position="159"/>
    </location>
    <ligand>
        <name>Mg(2+)</name>
        <dbReference type="ChEBI" id="CHEBI:18420"/>
    </ligand>
</feature>
<feature type="binding site" evidence="1">
    <location>
        <begin position="160"/>
        <end position="161"/>
    </location>
    <ligand>
        <name>thiamine diphosphate</name>
        <dbReference type="ChEBI" id="CHEBI:58937"/>
    </ligand>
</feature>
<feature type="binding site" evidence="1">
    <location>
        <position position="188"/>
    </location>
    <ligand>
        <name>Mg(2+)</name>
        <dbReference type="ChEBI" id="CHEBI:18420"/>
    </ligand>
</feature>
<feature type="binding site" evidence="1">
    <location>
        <position position="188"/>
    </location>
    <ligand>
        <name>thiamine diphosphate</name>
        <dbReference type="ChEBI" id="CHEBI:58937"/>
    </ligand>
</feature>
<feature type="binding site" evidence="1">
    <location>
        <position position="295"/>
    </location>
    <ligand>
        <name>thiamine diphosphate</name>
        <dbReference type="ChEBI" id="CHEBI:58937"/>
    </ligand>
</feature>
<feature type="binding site" evidence="1">
    <location>
        <position position="384"/>
    </location>
    <ligand>
        <name>thiamine diphosphate</name>
        <dbReference type="ChEBI" id="CHEBI:58937"/>
    </ligand>
</feature>
<keyword id="KW-0414">Isoprene biosynthesis</keyword>
<keyword id="KW-0460">Magnesium</keyword>
<keyword id="KW-0479">Metal-binding</keyword>
<keyword id="KW-1185">Reference proteome</keyword>
<keyword id="KW-0784">Thiamine biosynthesis</keyword>
<keyword id="KW-0786">Thiamine pyrophosphate</keyword>
<keyword id="KW-0808">Transferase</keyword>
<sequence length="645" mass="70353">MPKTFTQIPLTRPNTPLLDTLASPADLRKLPTPQLERVVDELREYLLYAVGQCGGHFGAGLGVVELTVALHYLYHTPDDKLVWDVGHQCYPHKILTGRRESLTSIRQAGGLSGFPKRSESEYDTFGVGHSSTSISAALGMALGAEMAGSDRRAVAIIGDGAMTAGQAFEAMSHAAHTRSNLLVILNDNNMSISHNVGGLSNYFARIWASKSYIALREGGKKVLSTMPAAWDFIRRTEESMKNMVSPDMLFEAIGFNYIGPIDGHNVNELVSTLRNLRDLEGPQLLHVYTTKGKGFAPAEADPVGYHAINKIEPKPKVQVAVPSKPSAAKQKLPKYQDIFGQWLCDMAEQDPRLVGITPAMCEGSGMVEFSRRFPGRYHDVAICEQHAVTLAGGLACENQKPVVAIYSTFLQRGYDQLIHDVALQELDVTFGLDRAGLVGEDGATHGGVFDLAYLRTVPNMIIAAPSDENECRQLLYSAYQHEGPAAVRYPRGTGPGATIEQTMTALPIGQSRTLREGLQVAILAFGAMVPAALEAAIPLNATVIDMRWVKPLDRDAILRAAAQHTLLVTVEDHQQMGGAGSAVNELLHEEAVVLDVLNLALPDHFIHHGKRDVLLAQAGLDAAGIERQIRERLNRQQRLREAHQR</sequence>
<organism>
    <name type="scientific">Alcanivorax borkumensis (strain ATCC 700651 / DSM 11573 / NCIMB 13689 / SK2)</name>
    <dbReference type="NCBI Taxonomy" id="393595"/>
    <lineage>
        <taxon>Bacteria</taxon>
        <taxon>Pseudomonadati</taxon>
        <taxon>Pseudomonadota</taxon>
        <taxon>Gammaproteobacteria</taxon>
        <taxon>Oceanospirillales</taxon>
        <taxon>Alcanivoracaceae</taxon>
        <taxon>Alcanivorax</taxon>
    </lineage>
</organism>
<reference key="1">
    <citation type="journal article" date="2006" name="Nat. Biotechnol.">
        <title>Genome sequence of the ubiquitous hydrocarbon-degrading marine bacterium Alcanivorax borkumensis.</title>
        <authorList>
            <person name="Schneiker S."/>
            <person name="Martins dos Santos V.A.P."/>
            <person name="Bartels D."/>
            <person name="Bekel T."/>
            <person name="Brecht M."/>
            <person name="Buhrmester J."/>
            <person name="Chernikova T.N."/>
            <person name="Denaro R."/>
            <person name="Ferrer M."/>
            <person name="Gertler C."/>
            <person name="Goesmann A."/>
            <person name="Golyshina O.V."/>
            <person name="Kaminski F."/>
            <person name="Khachane A.N."/>
            <person name="Lang S."/>
            <person name="Linke B."/>
            <person name="McHardy A.C."/>
            <person name="Meyer F."/>
            <person name="Nechitaylo T."/>
            <person name="Puehler A."/>
            <person name="Regenhardt D."/>
            <person name="Rupp O."/>
            <person name="Sabirova J.S."/>
            <person name="Selbitschka W."/>
            <person name="Yakimov M.M."/>
            <person name="Timmis K.N."/>
            <person name="Vorhoelter F.-J."/>
            <person name="Weidner S."/>
            <person name="Kaiser O."/>
            <person name="Golyshin P.N."/>
        </authorList>
    </citation>
    <scope>NUCLEOTIDE SEQUENCE [LARGE SCALE GENOMIC DNA]</scope>
    <source>
        <strain>ATCC 700651 / DSM 11573 / NCIMB 13689 / SK2</strain>
    </source>
</reference>
<proteinExistence type="inferred from homology"/>